<accession>Q8BMF3</accession>
<accession>Q499F4</accession>
<organism>
    <name type="scientific">Mus musculus</name>
    <name type="common">Mouse</name>
    <dbReference type="NCBI Taxonomy" id="10090"/>
    <lineage>
        <taxon>Eukaryota</taxon>
        <taxon>Metazoa</taxon>
        <taxon>Chordata</taxon>
        <taxon>Craniata</taxon>
        <taxon>Vertebrata</taxon>
        <taxon>Euteleostomi</taxon>
        <taxon>Mammalia</taxon>
        <taxon>Eutheria</taxon>
        <taxon>Euarchontoglires</taxon>
        <taxon>Glires</taxon>
        <taxon>Rodentia</taxon>
        <taxon>Myomorpha</taxon>
        <taxon>Muroidea</taxon>
        <taxon>Muridae</taxon>
        <taxon>Murinae</taxon>
        <taxon>Mus</taxon>
        <taxon>Mus</taxon>
    </lineage>
</organism>
<dbReference type="EC" id="1.1.1.40"/>
<dbReference type="EMBL" id="AK032196">
    <property type="protein sequence ID" value="BAC27751.1"/>
    <property type="molecule type" value="mRNA"/>
</dbReference>
<dbReference type="EMBL" id="BC099935">
    <property type="protein sequence ID" value="AAH99935.1"/>
    <property type="molecule type" value="mRNA"/>
</dbReference>
<dbReference type="CCDS" id="CCDS21443.1"/>
<dbReference type="RefSeq" id="NP_852072.2">
    <property type="nucleotide sequence ID" value="NM_181407.5"/>
</dbReference>
<dbReference type="RefSeq" id="XP_006507252.1">
    <property type="nucleotide sequence ID" value="XM_006507189.4"/>
</dbReference>
<dbReference type="RefSeq" id="XP_006507253.1">
    <property type="nucleotide sequence ID" value="XM_006507190.5"/>
</dbReference>
<dbReference type="SMR" id="Q8BMF3"/>
<dbReference type="BioGRID" id="224624">
    <property type="interactions" value="4"/>
</dbReference>
<dbReference type="FunCoup" id="Q8BMF3">
    <property type="interactions" value="1265"/>
</dbReference>
<dbReference type="IntAct" id="Q8BMF3">
    <property type="interactions" value="1"/>
</dbReference>
<dbReference type="MINT" id="Q8BMF3"/>
<dbReference type="STRING" id="10090.ENSMUSP00000032856"/>
<dbReference type="GlyGen" id="Q8BMF3">
    <property type="glycosylation" value="1 site, 1 O-linked glycan (1 site)"/>
</dbReference>
<dbReference type="iPTMnet" id="Q8BMF3"/>
<dbReference type="PhosphoSitePlus" id="Q8BMF3"/>
<dbReference type="SwissPalm" id="Q8BMF3"/>
<dbReference type="jPOST" id="Q8BMF3"/>
<dbReference type="PaxDb" id="10090-ENSMUSP00000032856"/>
<dbReference type="PeptideAtlas" id="Q8BMF3"/>
<dbReference type="ProteomicsDB" id="295814"/>
<dbReference type="Antibodypedia" id="31451">
    <property type="antibodies" value="130 antibodies from 25 providers"/>
</dbReference>
<dbReference type="DNASU" id="109264"/>
<dbReference type="Ensembl" id="ENSMUST00000032856.13">
    <property type="protein sequence ID" value="ENSMUSP00000032856.7"/>
    <property type="gene ID" value="ENSMUSG00000030621.18"/>
</dbReference>
<dbReference type="GeneID" id="109264"/>
<dbReference type="KEGG" id="mmu:109264"/>
<dbReference type="UCSC" id="uc009igd.1">
    <property type="organism name" value="mouse"/>
</dbReference>
<dbReference type="AGR" id="MGI:1916679"/>
<dbReference type="CTD" id="10873"/>
<dbReference type="MGI" id="MGI:1916679">
    <property type="gene designation" value="Me3"/>
</dbReference>
<dbReference type="VEuPathDB" id="HostDB:ENSMUSG00000030621"/>
<dbReference type="eggNOG" id="KOG1257">
    <property type="taxonomic scope" value="Eukaryota"/>
</dbReference>
<dbReference type="GeneTree" id="ENSGT00950000183134"/>
<dbReference type="HOGENOM" id="CLU_011405_5_2_1"/>
<dbReference type="InParanoid" id="Q8BMF3"/>
<dbReference type="OMA" id="EVPVTPW"/>
<dbReference type="OrthoDB" id="5365701at2759"/>
<dbReference type="PhylomeDB" id="Q8BMF3"/>
<dbReference type="TreeFam" id="TF300537"/>
<dbReference type="Reactome" id="R-MMU-70268">
    <property type="pathway name" value="Pyruvate metabolism"/>
</dbReference>
<dbReference type="BioGRID-ORCS" id="109264">
    <property type="hits" value="1 hit in 80 CRISPR screens"/>
</dbReference>
<dbReference type="ChiTaRS" id="Me3">
    <property type="organism name" value="mouse"/>
</dbReference>
<dbReference type="PRO" id="PR:Q8BMF3"/>
<dbReference type="Proteomes" id="UP000000589">
    <property type="component" value="Chromosome 7"/>
</dbReference>
<dbReference type="RNAct" id="Q8BMF3">
    <property type="molecule type" value="protein"/>
</dbReference>
<dbReference type="Bgee" id="ENSMUSG00000030621">
    <property type="expression patterns" value="Expressed in interventricular septum and 170 other cell types or tissues"/>
</dbReference>
<dbReference type="ExpressionAtlas" id="Q8BMF3">
    <property type="expression patterns" value="baseline and differential"/>
</dbReference>
<dbReference type="GO" id="GO:0005759">
    <property type="term" value="C:mitochondrial matrix"/>
    <property type="evidence" value="ECO:0000314"/>
    <property type="project" value="MGI"/>
</dbReference>
<dbReference type="GO" id="GO:0005739">
    <property type="term" value="C:mitochondrion"/>
    <property type="evidence" value="ECO:0007005"/>
    <property type="project" value="MGI"/>
</dbReference>
<dbReference type="GO" id="GO:0004473">
    <property type="term" value="F:malate dehydrogenase (decarboxylating) (NADP+) activity"/>
    <property type="evidence" value="ECO:0000314"/>
    <property type="project" value="MGI"/>
</dbReference>
<dbReference type="GO" id="GO:0004470">
    <property type="term" value="F:malic enzyme activity"/>
    <property type="evidence" value="ECO:0000250"/>
    <property type="project" value="UniProtKB"/>
</dbReference>
<dbReference type="GO" id="GO:0046872">
    <property type="term" value="F:metal ion binding"/>
    <property type="evidence" value="ECO:0007669"/>
    <property type="project" value="UniProtKB-KW"/>
</dbReference>
<dbReference type="GO" id="GO:0051287">
    <property type="term" value="F:NAD binding"/>
    <property type="evidence" value="ECO:0007669"/>
    <property type="project" value="InterPro"/>
</dbReference>
<dbReference type="GO" id="GO:0070401">
    <property type="term" value="F:NADP+ binding"/>
    <property type="evidence" value="ECO:0007669"/>
    <property type="project" value="Ensembl"/>
</dbReference>
<dbReference type="GO" id="GO:0008948">
    <property type="term" value="F:oxaloacetate decarboxylase activity"/>
    <property type="evidence" value="ECO:0007669"/>
    <property type="project" value="RHEA"/>
</dbReference>
<dbReference type="GO" id="GO:0006108">
    <property type="term" value="P:malate metabolic process"/>
    <property type="evidence" value="ECO:0000250"/>
    <property type="project" value="UniProtKB"/>
</dbReference>
<dbReference type="GO" id="GO:0006090">
    <property type="term" value="P:pyruvate metabolic process"/>
    <property type="evidence" value="ECO:0000314"/>
    <property type="project" value="MGI"/>
</dbReference>
<dbReference type="CDD" id="cd05312">
    <property type="entry name" value="NAD_bind_1_malic_enz"/>
    <property type="match status" value="1"/>
</dbReference>
<dbReference type="FunFam" id="3.40.50.10380:FF:000004">
    <property type="entry name" value="Malic enzyme"/>
    <property type="match status" value="1"/>
</dbReference>
<dbReference type="FunFam" id="3.40.50.720:FF:000060">
    <property type="entry name" value="Malic enzyme"/>
    <property type="match status" value="1"/>
</dbReference>
<dbReference type="Gene3D" id="3.40.50.10380">
    <property type="entry name" value="Malic enzyme, N-terminal domain"/>
    <property type="match status" value="1"/>
</dbReference>
<dbReference type="Gene3D" id="3.40.50.720">
    <property type="entry name" value="NAD(P)-binding Rossmann-like Domain"/>
    <property type="match status" value="1"/>
</dbReference>
<dbReference type="InterPro" id="IPR046346">
    <property type="entry name" value="Aminoacid_DH-like_N_sf"/>
</dbReference>
<dbReference type="InterPro" id="IPR015884">
    <property type="entry name" value="Malic_enzyme_CS"/>
</dbReference>
<dbReference type="InterPro" id="IPR012301">
    <property type="entry name" value="Malic_N_dom"/>
</dbReference>
<dbReference type="InterPro" id="IPR037062">
    <property type="entry name" value="Malic_N_dom_sf"/>
</dbReference>
<dbReference type="InterPro" id="IPR012302">
    <property type="entry name" value="Malic_NAD-bd"/>
</dbReference>
<dbReference type="InterPro" id="IPR001891">
    <property type="entry name" value="Malic_OxRdtase"/>
</dbReference>
<dbReference type="InterPro" id="IPR036291">
    <property type="entry name" value="NAD(P)-bd_dom_sf"/>
</dbReference>
<dbReference type="NCBIfam" id="NF010052">
    <property type="entry name" value="PRK13529.1"/>
    <property type="match status" value="1"/>
</dbReference>
<dbReference type="PANTHER" id="PTHR23406">
    <property type="entry name" value="MALIC ENZYME-RELATED"/>
    <property type="match status" value="1"/>
</dbReference>
<dbReference type="PANTHER" id="PTHR23406:SF20">
    <property type="entry name" value="NADP-DEPENDENT MALIC ENZYME, MITOCHONDRIAL"/>
    <property type="match status" value="1"/>
</dbReference>
<dbReference type="Pfam" id="PF00390">
    <property type="entry name" value="malic"/>
    <property type="match status" value="1"/>
</dbReference>
<dbReference type="Pfam" id="PF03949">
    <property type="entry name" value="Malic_M"/>
    <property type="match status" value="1"/>
</dbReference>
<dbReference type="PIRSF" id="PIRSF000106">
    <property type="entry name" value="ME"/>
    <property type="match status" value="1"/>
</dbReference>
<dbReference type="PRINTS" id="PR00072">
    <property type="entry name" value="MALOXRDTASE"/>
</dbReference>
<dbReference type="SMART" id="SM01274">
    <property type="entry name" value="malic"/>
    <property type="match status" value="1"/>
</dbReference>
<dbReference type="SMART" id="SM00919">
    <property type="entry name" value="Malic_M"/>
    <property type="match status" value="1"/>
</dbReference>
<dbReference type="SUPFAM" id="SSF53223">
    <property type="entry name" value="Aminoacid dehydrogenase-like, N-terminal domain"/>
    <property type="match status" value="1"/>
</dbReference>
<dbReference type="SUPFAM" id="SSF51735">
    <property type="entry name" value="NAD(P)-binding Rossmann-fold domains"/>
    <property type="match status" value="1"/>
</dbReference>
<dbReference type="PROSITE" id="PS00331">
    <property type="entry name" value="MALIC_ENZYMES"/>
    <property type="match status" value="1"/>
</dbReference>
<comment type="catalytic activity">
    <reaction>
        <text>(S)-malate + NADP(+) = pyruvate + CO2 + NADPH</text>
        <dbReference type="Rhea" id="RHEA:18253"/>
        <dbReference type="ChEBI" id="CHEBI:15361"/>
        <dbReference type="ChEBI" id="CHEBI:15589"/>
        <dbReference type="ChEBI" id="CHEBI:16526"/>
        <dbReference type="ChEBI" id="CHEBI:57783"/>
        <dbReference type="ChEBI" id="CHEBI:58349"/>
        <dbReference type="EC" id="1.1.1.40"/>
    </reaction>
</comment>
<comment type="catalytic activity">
    <reaction>
        <text>oxaloacetate + H(+) = pyruvate + CO2</text>
        <dbReference type="Rhea" id="RHEA:15641"/>
        <dbReference type="ChEBI" id="CHEBI:15361"/>
        <dbReference type="ChEBI" id="CHEBI:15378"/>
        <dbReference type="ChEBI" id="CHEBI:16452"/>
        <dbReference type="ChEBI" id="CHEBI:16526"/>
        <dbReference type="EC" id="1.1.1.40"/>
    </reaction>
</comment>
<comment type="cofactor">
    <cofactor evidence="1">
        <name>Mg(2+)</name>
        <dbReference type="ChEBI" id="CHEBI:18420"/>
    </cofactor>
    <cofactor evidence="1">
        <name>Mn(2+)</name>
        <dbReference type="ChEBI" id="CHEBI:29035"/>
    </cofactor>
    <text evidence="1">Divalent metal cations. Prefers magnesium or manganese.</text>
</comment>
<comment type="subcellular location">
    <subcellularLocation>
        <location evidence="1">Mitochondrion matrix</location>
    </subcellularLocation>
</comment>
<comment type="similarity">
    <text evidence="5">Belongs to the malic enzymes family.</text>
</comment>
<name>MAON_MOUSE</name>
<reference key="1">
    <citation type="journal article" date="2005" name="Science">
        <title>The transcriptional landscape of the mammalian genome.</title>
        <authorList>
            <person name="Carninci P."/>
            <person name="Kasukawa T."/>
            <person name="Katayama S."/>
            <person name="Gough J."/>
            <person name="Frith M.C."/>
            <person name="Maeda N."/>
            <person name="Oyama R."/>
            <person name="Ravasi T."/>
            <person name="Lenhard B."/>
            <person name="Wells C."/>
            <person name="Kodzius R."/>
            <person name="Shimokawa K."/>
            <person name="Bajic V.B."/>
            <person name="Brenner S.E."/>
            <person name="Batalov S."/>
            <person name="Forrest A.R."/>
            <person name="Zavolan M."/>
            <person name="Davis M.J."/>
            <person name="Wilming L.G."/>
            <person name="Aidinis V."/>
            <person name="Allen J.E."/>
            <person name="Ambesi-Impiombato A."/>
            <person name="Apweiler R."/>
            <person name="Aturaliya R.N."/>
            <person name="Bailey T.L."/>
            <person name="Bansal M."/>
            <person name="Baxter L."/>
            <person name="Beisel K.W."/>
            <person name="Bersano T."/>
            <person name="Bono H."/>
            <person name="Chalk A.M."/>
            <person name="Chiu K.P."/>
            <person name="Choudhary V."/>
            <person name="Christoffels A."/>
            <person name="Clutterbuck D.R."/>
            <person name="Crowe M.L."/>
            <person name="Dalla E."/>
            <person name="Dalrymple B.P."/>
            <person name="de Bono B."/>
            <person name="Della Gatta G."/>
            <person name="di Bernardo D."/>
            <person name="Down T."/>
            <person name="Engstrom P."/>
            <person name="Fagiolini M."/>
            <person name="Faulkner G."/>
            <person name="Fletcher C.F."/>
            <person name="Fukushima T."/>
            <person name="Furuno M."/>
            <person name="Futaki S."/>
            <person name="Gariboldi M."/>
            <person name="Georgii-Hemming P."/>
            <person name="Gingeras T.R."/>
            <person name="Gojobori T."/>
            <person name="Green R.E."/>
            <person name="Gustincich S."/>
            <person name="Harbers M."/>
            <person name="Hayashi Y."/>
            <person name="Hensch T.K."/>
            <person name="Hirokawa N."/>
            <person name="Hill D."/>
            <person name="Huminiecki L."/>
            <person name="Iacono M."/>
            <person name="Ikeo K."/>
            <person name="Iwama A."/>
            <person name="Ishikawa T."/>
            <person name="Jakt M."/>
            <person name="Kanapin A."/>
            <person name="Katoh M."/>
            <person name="Kawasawa Y."/>
            <person name="Kelso J."/>
            <person name="Kitamura H."/>
            <person name="Kitano H."/>
            <person name="Kollias G."/>
            <person name="Krishnan S.P."/>
            <person name="Kruger A."/>
            <person name="Kummerfeld S.K."/>
            <person name="Kurochkin I.V."/>
            <person name="Lareau L.F."/>
            <person name="Lazarevic D."/>
            <person name="Lipovich L."/>
            <person name="Liu J."/>
            <person name="Liuni S."/>
            <person name="McWilliam S."/>
            <person name="Madan Babu M."/>
            <person name="Madera M."/>
            <person name="Marchionni L."/>
            <person name="Matsuda H."/>
            <person name="Matsuzawa S."/>
            <person name="Miki H."/>
            <person name="Mignone F."/>
            <person name="Miyake S."/>
            <person name="Morris K."/>
            <person name="Mottagui-Tabar S."/>
            <person name="Mulder N."/>
            <person name="Nakano N."/>
            <person name="Nakauchi H."/>
            <person name="Ng P."/>
            <person name="Nilsson R."/>
            <person name="Nishiguchi S."/>
            <person name="Nishikawa S."/>
            <person name="Nori F."/>
            <person name="Ohara O."/>
            <person name="Okazaki Y."/>
            <person name="Orlando V."/>
            <person name="Pang K.C."/>
            <person name="Pavan W.J."/>
            <person name="Pavesi G."/>
            <person name="Pesole G."/>
            <person name="Petrovsky N."/>
            <person name="Piazza S."/>
            <person name="Reed J."/>
            <person name="Reid J.F."/>
            <person name="Ring B.Z."/>
            <person name="Ringwald M."/>
            <person name="Rost B."/>
            <person name="Ruan Y."/>
            <person name="Salzberg S.L."/>
            <person name="Sandelin A."/>
            <person name="Schneider C."/>
            <person name="Schoenbach C."/>
            <person name="Sekiguchi K."/>
            <person name="Semple C.A."/>
            <person name="Seno S."/>
            <person name="Sessa L."/>
            <person name="Sheng Y."/>
            <person name="Shibata Y."/>
            <person name="Shimada H."/>
            <person name="Shimada K."/>
            <person name="Silva D."/>
            <person name="Sinclair B."/>
            <person name="Sperling S."/>
            <person name="Stupka E."/>
            <person name="Sugiura K."/>
            <person name="Sultana R."/>
            <person name="Takenaka Y."/>
            <person name="Taki K."/>
            <person name="Tammoja K."/>
            <person name="Tan S.L."/>
            <person name="Tang S."/>
            <person name="Taylor M.S."/>
            <person name="Tegner J."/>
            <person name="Teichmann S.A."/>
            <person name="Ueda H.R."/>
            <person name="van Nimwegen E."/>
            <person name="Verardo R."/>
            <person name="Wei C.L."/>
            <person name="Yagi K."/>
            <person name="Yamanishi H."/>
            <person name="Zabarovsky E."/>
            <person name="Zhu S."/>
            <person name="Zimmer A."/>
            <person name="Hide W."/>
            <person name="Bult C."/>
            <person name="Grimmond S.M."/>
            <person name="Teasdale R.D."/>
            <person name="Liu E.T."/>
            <person name="Brusic V."/>
            <person name="Quackenbush J."/>
            <person name="Wahlestedt C."/>
            <person name="Mattick J.S."/>
            <person name="Hume D.A."/>
            <person name="Kai C."/>
            <person name="Sasaki D."/>
            <person name="Tomaru Y."/>
            <person name="Fukuda S."/>
            <person name="Kanamori-Katayama M."/>
            <person name="Suzuki M."/>
            <person name="Aoki J."/>
            <person name="Arakawa T."/>
            <person name="Iida J."/>
            <person name="Imamura K."/>
            <person name="Itoh M."/>
            <person name="Kato T."/>
            <person name="Kawaji H."/>
            <person name="Kawagashira N."/>
            <person name="Kawashima T."/>
            <person name="Kojima M."/>
            <person name="Kondo S."/>
            <person name="Konno H."/>
            <person name="Nakano K."/>
            <person name="Ninomiya N."/>
            <person name="Nishio T."/>
            <person name="Okada M."/>
            <person name="Plessy C."/>
            <person name="Shibata K."/>
            <person name="Shiraki T."/>
            <person name="Suzuki S."/>
            <person name="Tagami M."/>
            <person name="Waki K."/>
            <person name="Watahiki A."/>
            <person name="Okamura-Oho Y."/>
            <person name="Suzuki H."/>
            <person name="Kawai J."/>
            <person name="Hayashizaki Y."/>
        </authorList>
    </citation>
    <scope>NUCLEOTIDE SEQUENCE [LARGE SCALE MRNA]</scope>
    <source>
        <strain>C57BL/6J</strain>
        <tissue>Olfactory bulb</tissue>
    </source>
</reference>
<reference key="2">
    <citation type="journal article" date="2004" name="Genome Res.">
        <title>The status, quality, and expansion of the NIH full-length cDNA project: the Mammalian Gene Collection (MGC).</title>
        <authorList>
            <consortium name="The MGC Project Team"/>
        </authorList>
    </citation>
    <scope>NUCLEOTIDE SEQUENCE [LARGE SCALE MRNA]</scope>
    <source>
        <strain>CD-1</strain>
        <tissue>Neural stem cell</tissue>
    </source>
</reference>
<reference key="3">
    <citation type="submission" date="2007-03" db="UniProtKB">
        <authorList>
            <person name="Lubec G."/>
            <person name="Klug S."/>
        </authorList>
    </citation>
    <scope>PROTEIN SEQUENCE OF 71-92 AND 481-506</scope>
    <scope>IDENTIFICATION BY MASS SPECTROMETRY</scope>
    <source>
        <tissue>Hippocampus</tissue>
    </source>
</reference>
<reference key="4">
    <citation type="journal article" date="2010" name="Cell">
        <title>A tissue-specific atlas of mouse protein phosphorylation and expression.</title>
        <authorList>
            <person name="Huttlin E.L."/>
            <person name="Jedrychowski M.P."/>
            <person name="Elias J.E."/>
            <person name="Goswami T."/>
            <person name="Rad R."/>
            <person name="Beausoleil S.A."/>
            <person name="Villen J."/>
            <person name="Haas W."/>
            <person name="Sowa M.E."/>
            <person name="Gygi S.P."/>
        </authorList>
    </citation>
    <scope>IDENTIFICATION BY MASS SPECTROMETRY [LARGE SCALE ANALYSIS]</scope>
    <source>
        <tissue>Brain</tissue>
        <tissue>Brown adipose tissue</tissue>
        <tissue>Heart</tissue>
        <tissue>Kidney</tissue>
    </source>
</reference>
<feature type="transit peptide" description="Mitochondrion" evidence="3">
    <location>
        <begin position="1"/>
        <end status="unknown"/>
    </location>
</feature>
<feature type="chain" id="PRO_0000018540" description="NADP-dependent malic enzyme, mitochondrial">
    <location>
        <begin status="unknown"/>
        <end position="604"/>
    </location>
</feature>
<feature type="region of interest" description="Disordered" evidence="4">
    <location>
        <begin position="28"/>
        <end position="50"/>
    </location>
</feature>
<feature type="active site" description="Proton donor" evidence="1">
    <location>
        <position position="137"/>
    </location>
</feature>
<feature type="active site" description="Proton acceptor" evidence="1">
    <location>
        <position position="208"/>
    </location>
</feature>
<feature type="binding site" evidence="1">
    <location>
        <position position="190"/>
    </location>
    <ligand>
        <name>NADP(+)</name>
        <dbReference type="ChEBI" id="CHEBI:58349"/>
    </ligand>
</feature>
<feature type="binding site" evidence="1">
    <location>
        <position position="280"/>
    </location>
    <ligand>
        <name>a divalent metal cation</name>
        <dbReference type="ChEBI" id="CHEBI:60240"/>
    </ligand>
</feature>
<feature type="binding site" evidence="1">
    <location>
        <position position="281"/>
    </location>
    <ligand>
        <name>a divalent metal cation</name>
        <dbReference type="ChEBI" id="CHEBI:60240"/>
    </ligand>
</feature>
<feature type="binding site" evidence="1">
    <location>
        <position position="304"/>
    </location>
    <ligand>
        <name>a divalent metal cation</name>
        <dbReference type="ChEBI" id="CHEBI:60240"/>
    </ligand>
</feature>
<feature type="binding site" evidence="1">
    <location>
        <position position="304"/>
    </location>
    <ligand>
        <name>NADP(+)</name>
        <dbReference type="ChEBI" id="CHEBI:58349"/>
    </ligand>
</feature>
<feature type="binding site" evidence="1">
    <location>
        <position position="443"/>
    </location>
    <ligand>
        <name>NADP(+)</name>
        <dbReference type="ChEBI" id="CHEBI:58349"/>
    </ligand>
</feature>
<feature type="site" description="Important for activity" evidence="1">
    <location>
        <position position="304"/>
    </location>
</feature>
<feature type="modified residue" description="Phosphoserine" evidence="2">
    <location>
        <position position="371"/>
    </location>
</feature>
<feature type="sequence conflict" description="In Ref. 1; BAC27751." evidence="5" ref="1">
    <original>L</original>
    <variation>H</variation>
    <location>
        <position position="113"/>
    </location>
</feature>
<feature type="sequence conflict" description="In Ref. 1; BAC27751." evidence="5" ref="1">
    <original>G</original>
    <variation>D</variation>
    <location>
        <position position="338"/>
    </location>
</feature>
<sequence>MGAALGTGARLTSVPRIACSSLRRQAPSAPAQGCHSKSGPPRPVPLKKRGYDVTRNPHLNKGMAFTLEERLQLGIHGLIPPCFLSQDVQLLRIMRYYENQQSDLDKYIILMTLQDRNEKLFYRVLTSDVEKFMPIVYTPTVGLACQHYGLTFRRPRGLFITIHDKGHIATMLNSWPEDNIKAVVVTDGERILGLGDLGCYGMGIPVGKLALYTACGGVNPQQCLPVLLDVGTNNEELLRDPLYIGLKHQRVRGEEYDDLLDEFMQAVTDKFGINCLIQFEDFANANAFRLLNKYRNKYCMFNDDIQGTASVAVAGILAALRITKNRLSNHVFVFQGAGEAAMGIAHLLVMALEKEGIPKTEAIKKIWMVDSKGLIVKGRSHLNHEKEMFAQDHPEVNSLEEVVRLVKPTAIIGVAAIAGAFTEQILRDMASFHERPIVFALSNPTSKAECTAEKCYRVTEGRGIFASGSPFKSVTLEDGRTFTPGQGNNAYVFPGVALGVIAGGIRHIPDEIFLLTAEQIAQEVSEQHLSQGRLYPPLSTIRDVSLRIAVKVLDYAYKHNLASYYPEPKDKEAFVKSLIYTPDYDSFSLDTYSWPKEAMSVQKV</sequence>
<proteinExistence type="evidence at protein level"/>
<keyword id="KW-0903">Direct protein sequencing</keyword>
<keyword id="KW-0479">Metal-binding</keyword>
<keyword id="KW-0496">Mitochondrion</keyword>
<keyword id="KW-0521">NADP</keyword>
<keyword id="KW-0560">Oxidoreductase</keyword>
<keyword id="KW-0597">Phosphoprotein</keyword>
<keyword id="KW-1185">Reference proteome</keyword>
<keyword id="KW-0809">Transit peptide</keyword>
<protein>
    <recommendedName>
        <fullName>NADP-dependent malic enzyme, mitochondrial</fullName>
        <shortName>NADP-ME</shortName>
        <ecNumber>1.1.1.40</ecNumber>
    </recommendedName>
    <alternativeName>
        <fullName>Malic enzyme 3</fullName>
    </alternativeName>
</protein>
<evidence type="ECO:0000250" key="1"/>
<evidence type="ECO:0000250" key="2">
    <source>
        <dbReference type="UniProtKB" id="P06801"/>
    </source>
</evidence>
<evidence type="ECO:0000255" key="3"/>
<evidence type="ECO:0000256" key="4">
    <source>
        <dbReference type="SAM" id="MobiDB-lite"/>
    </source>
</evidence>
<evidence type="ECO:0000305" key="5"/>
<gene>
    <name type="primary">Me3</name>
</gene>